<accession>C7GTF0</accession>
<reference key="1">
    <citation type="journal article" date="2009" name="Genome Res.">
        <title>Genome structure of a Saccharomyces cerevisiae strain widely used in bioethanol production.</title>
        <authorList>
            <person name="Argueso J.L."/>
            <person name="Carazzolle M.F."/>
            <person name="Mieczkowski P.A."/>
            <person name="Duarte F.M."/>
            <person name="Netto O.V.C."/>
            <person name="Missawa S.K."/>
            <person name="Galzerani F."/>
            <person name="Costa G.G.L."/>
            <person name="Vidal R.O."/>
            <person name="Noronha M.F."/>
            <person name="Dominska M."/>
            <person name="Andrietta M.G.S."/>
            <person name="Andrietta S.R."/>
            <person name="Cunha A.F."/>
            <person name="Gomes L.H."/>
            <person name="Tavares F.C.A."/>
            <person name="Alcarde A.R."/>
            <person name="Dietrich F.S."/>
            <person name="McCusker J.H."/>
            <person name="Petes T.D."/>
            <person name="Pereira G.A.G."/>
        </authorList>
    </citation>
    <scope>NUCLEOTIDE SEQUENCE [LARGE SCALE GENOMIC DNA]</scope>
    <source>
        <strain>JAY291</strain>
    </source>
</reference>
<evidence type="ECO:0000250" key="1"/>
<evidence type="ECO:0000250" key="2">
    <source>
        <dbReference type="UniProtKB" id="P53882"/>
    </source>
</evidence>
<evidence type="ECO:0000255" key="3"/>
<evidence type="ECO:0000256" key="4">
    <source>
        <dbReference type="SAM" id="MobiDB-lite"/>
    </source>
</evidence>
<evidence type="ECO:0000305" key="5"/>
<comment type="subcellular location">
    <subcellularLocation>
        <location evidence="1">Vacuole membrane</location>
        <topology evidence="1">Single-pass membrane protein</topology>
    </subcellularLocation>
</comment>
<comment type="similarity">
    <text evidence="5">Belongs to the TDA7 family.</text>
</comment>
<dbReference type="EMBL" id="ACFL01000260">
    <property type="protein sequence ID" value="EEU05928.1"/>
    <property type="molecule type" value="Genomic_DNA"/>
</dbReference>
<dbReference type="SMR" id="C7GTF0"/>
<dbReference type="GlyCosmos" id="C7GTF0">
    <property type="glycosylation" value="6 sites, No reported glycans"/>
</dbReference>
<dbReference type="Proteomes" id="UP000008073">
    <property type="component" value="Unassembled WGS sequence"/>
</dbReference>
<dbReference type="GO" id="GO:0005774">
    <property type="term" value="C:vacuolar membrane"/>
    <property type="evidence" value="ECO:0007669"/>
    <property type="project" value="UniProtKB-SubCell"/>
</dbReference>
<name>TDA7_YEAS2</name>
<protein>
    <recommendedName>
        <fullName>Topoisomerase I damage affected protein 7</fullName>
    </recommendedName>
</protein>
<keyword id="KW-0325">Glycoprotein</keyword>
<keyword id="KW-1017">Isopeptide bond</keyword>
<keyword id="KW-0472">Membrane</keyword>
<keyword id="KW-0597">Phosphoprotein</keyword>
<keyword id="KW-0812">Transmembrane</keyword>
<keyword id="KW-1133">Transmembrane helix</keyword>
<keyword id="KW-0832">Ubl conjugation</keyword>
<keyword id="KW-0926">Vacuole</keyword>
<organism>
    <name type="scientific">Saccharomyces cerevisiae (strain JAY291)</name>
    <name type="common">Baker's yeast</name>
    <dbReference type="NCBI Taxonomy" id="574961"/>
    <lineage>
        <taxon>Eukaryota</taxon>
        <taxon>Fungi</taxon>
        <taxon>Dikarya</taxon>
        <taxon>Ascomycota</taxon>
        <taxon>Saccharomycotina</taxon>
        <taxon>Saccharomycetes</taxon>
        <taxon>Saccharomycetales</taxon>
        <taxon>Saccharomycetaceae</taxon>
        <taxon>Saccharomyces</taxon>
    </lineage>
</organism>
<gene>
    <name type="primary">TDA7</name>
    <name type="ORF">C1Q_03716</name>
</gene>
<sequence length="636" mass="67389">MNSNSTIGRTTLGESDTISLSFSEPSSSLNSRSTDVVFASTSTLVPQQGSLTSLPPVSSTATPTYYSTSLTYDETLHTSIDVSSTSTLVSSTDSSSSSEQDTYSSQYDPATSSYSIITPSMSIFSSTSPMSSSSSITSEWSSLTSTTPTLSSSATSLSSSWSSLSSPSSLLVSSSLSLSLSSSYSDTKLFSFDSRSSIFSPSTPTVISPSYTYLSSISATSFQISTTSELSSSWFSTISSPSTTSNKDTTFPSSSRNTSTSFYSSSLSSTNDFSTISKSSKLSPSASSSTVSISTISVPTSSSVSSSSSKVPSNRPSSSSSSDDTTSAYSSTYTFQSLQSTTSSSIPPTTQTPSTSTISTSPIPTSSQVFNTVAISSSEDSKTIYYFYTQTYDITDSSTTFVTGLPTTIAVAKSEVTSFSAPSSTITADMSFYQHWLDGSLDNNKNQGTSKTNTGTIVGSVVGSVGGILICVLVVWFMLVRKRKAKRHFKENDSFCHEIGRRTGFPTTAQAKEASLQAQDSGSQQRNTETASANNPFSNEFNFKARGNPPPVPPPRNVTAMNGSFQNMRSNFMDQENRFSYGSSFTYSSLGSSTQGGFSTLSSNSIRLGRGLDNDISHDERNTVQNNSQGFLREII</sequence>
<proteinExistence type="inferred from homology"/>
<feature type="chain" id="PRO_0000410747" description="Topoisomerase I damage affected protein 7">
    <location>
        <begin position="1"/>
        <end position="636"/>
    </location>
</feature>
<feature type="transmembrane region" description="Helical" evidence="3">
    <location>
        <begin position="457"/>
        <end position="477"/>
    </location>
</feature>
<feature type="region of interest" description="Disordered" evidence="4">
    <location>
        <begin position="1"/>
        <end position="33"/>
    </location>
</feature>
<feature type="region of interest" description="Disordered" evidence="4">
    <location>
        <begin position="87"/>
        <end position="109"/>
    </location>
</feature>
<feature type="region of interest" description="Disordered" evidence="4">
    <location>
        <begin position="238"/>
        <end position="271"/>
    </location>
</feature>
<feature type="region of interest" description="Disordered" evidence="4">
    <location>
        <begin position="299"/>
        <end position="326"/>
    </location>
</feature>
<feature type="region of interest" description="Disordered" evidence="4">
    <location>
        <begin position="339"/>
        <end position="362"/>
    </location>
</feature>
<feature type="region of interest" description="Disordered" evidence="4">
    <location>
        <begin position="510"/>
        <end position="551"/>
    </location>
</feature>
<feature type="compositionally biased region" description="Polar residues" evidence="4">
    <location>
        <begin position="1"/>
        <end position="18"/>
    </location>
</feature>
<feature type="compositionally biased region" description="Low complexity" evidence="4">
    <location>
        <begin position="19"/>
        <end position="33"/>
    </location>
</feature>
<feature type="compositionally biased region" description="Low complexity" evidence="4">
    <location>
        <begin position="87"/>
        <end position="108"/>
    </location>
</feature>
<feature type="compositionally biased region" description="Polar residues" evidence="4">
    <location>
        <begin position="510"/>
        <end position="541"/>
    </location>
</feature>
<feature type="modified residue" description="Phosphoserine" evidence="2">
    <location>
        <position position="628"/>
    </location>
</feature>
<feature type="glycosylation site" description="N-linked (GlcNAc...) asparagine" evidence="3">
    <location>
        <position position="4"/>
    </location>
</feature>
<feature type="glycosylation site" description="N-linked (GlcNAc...) asparagine" evidence="3">
    <location>
        <position position="257"/>
    </location>
</feature>
<feature type="glycosylation site" description="N-linked (GlcNAc...) asparagine" evidence="3">
    <location>
        <position position="492"/>
    </location>
</feature>
<feature type="glycosylation site" description="N-linked (GlcNAc...) asparagine" evidence="3">
    <location>
        <position position="557"/>
    </location>
</feature>
<feature type="glycosylation site" description="N-linked (GlcNAc...) asparagine" evidence="3">
    <location>
        <position position="562"/>
    </location>
</feature>
<feature type="glycosylation site" description="N-linked (GlcNAc...) asparagine" evidence="3">
    <location>
        <position position="626"/>
    </location>
</feature>
<feature type="cross-link" description="Glycyl lysine isopeptide (Lys-Gly) (interchain with G-Cter in ubiquitin)" evidence="2">
    <location>
        <position position="512"/>
    </location>
</feature>